<feature type="chain" id="PRO_0000112248" description="Carbamoyl phosphate synthase small chain">
    <location>
        <begin position="1"/>
        <end position="364"/>
    </location>
</feature>
<feature type="domain" description="Glutamine amidotransferase type-1" evidence="1">
    <location>
        <begin position="171"/>
        <end position="358"/>
    </location>
</feature>
<feature type="region of interest" description="CPSase" evidence="1">
    <location>
        <begin position="1"/>
        <end position="171"/>
    </location>
</feature>
<feature type="region of interest" description="CPSase">
    <location>
        <begin position="1"/>
        <end position="167"/>
    </location>
</feature>
<feature type="active site" description="Nucleophile" evidence="1">
    <location>
        <position position="246"/>
    </location>
</feature>
<feature type="active site" evidence="1">
    <location>
        <position position="331"/>
    </location>
</feature>
<feature type="active site" evidence="1">
    <location>
        <position position="333"/>
    </location>
</feature>
<feature type="binding site" evidence="1">
    <location>
        <position position="45"/>
    </location>
    <ligand>
        <name>L-glutamine</name>
        <dbReference type="ChEBI" id="CHEBI:58359"/>
    </ligand>
</feature>
<feature type="binding site" evidence="1">
    <location>
        <position position="219"/>
    </location>
    <ligand>
        <name>L-glutamine</name>
        <dbReference type="ChEBI" id="CHEBI:58359"/>
    </ligand>
</feature>
<feature type="binding site" evidence="1">
    <location>
        <position position="221"/>
    </location>
    <ligand>
        <name>L-glutamine</name>
        <dbReference type="ChEBI" id="CHEBI:58359"/>
    </ligand>
</feature>
<feature type="binding site" evidence="1">
    <location>
        <position position="247"/>
    </location>
    <ligand>
        <name>L-glutamine</name>
        <dbReference type="ChEBI" id="CHEBI:58359"/>
    </ligand>
</feature>
<feature type="binding site" evidence="1">
    <location>
        <position position="250"/>
    </location>
    <ligand>
        <name>L-glutamine</name>
        <dbReference type="ChEBI" id="CHEBI:58359"/>
    </ligand>
</feature>
<feature type="binding site" evidence="1">
    <location>
        <position position="288"/>
    </location>
    <ligand>
        <name>L-glutamine</name>
        <dbReference type="ChEBI" id="CHEBI:58359"/>
    </ligand>
</feature>
<feature type="binding site" evidence="1">
    <location>
        <position position="290"/>
    </location>
    <ligand>
        <name>L-glutamine</name>
        <dbReference type="ChEBI" id="CHEBI:58359"/>
    </ligand>
</feature>
<feature type="binding site" evidence="1">
    <location>
        <position position="291"/>
    </location>
    <ligand>
        <name>L-glutamine</name>
        <dbReference type="ChEBI" id="CHEBI:58359"/>
    </ligand>
</feature>
<dbReference type="EC" id="6.3.5.5" evidence="1"/>
<dbReference type="EMBL" id="X73308">
    <property type="protein sequence ID" value="CAA51738.1"/>
    <property type="molecule type" value="Genomic_DNA"/>
</dbReference>
<dbReference type="PIR" id="I40168">
    <property type="entry name" value="I40168"/>
</dbReference>
<dbReference type="SMR" id="P52557"/>
<dbReference type="MEROPS" id="C26.A33"/>
<dbReference type="UniPathway" id="UPA00068">
    <property type="reaction ID" value="UER00171"/>
</dbReference>
<dbReference type="UniPathway" id="UPA00070">
    <property type="reaction ID" value="UER00115"/>
</dbReference>
<dbReference type="GO" id="GO:0005524">
    <property type="term" value="F:ATP binding"/>
    <property type="evidence" value="ECO:0007669"/>
    <property type="project" value="UniProtKB-UniRule"/>
</dbReference>
<dbReference type="GO" id="GO:0004088">
    <property type="term" value="F:carbamoyl-phosphate synthase (glutamine-hydrolyzing) activity"/>
    <property type="evidence" value="ECO:0007669"/>
    <property type="project" value="UniProtKB-UniRule"/>
</dbReference>
<dbReference type="GO" id="GO:0004359">
    <property type="term" value="F:glutaminase activity"/>
    <property type="evidence" value="ECO:0007669"/>
    <property type="project" value="RHEA"/>
</dbReference>
<dbReference type="GO" id="GO:0006207">
    <property type="term" value="P:'de novo' pyrimidine nucleobase biosynthetic process"/>
    <property type="evidence" value="ECO:0007669"/>
    <property type="project" value="InterPro"/>
</dbReference>
<dbReference type="GO" id="GO:0044205">
    <property type="term" value="P:'de novo' UMP biosynthetic process"/>
    <property type="evidence" value="ECO:0007669"/>
    <property type="project" value="UniProtKB-UniRule"/>
</dbReference>
<dbReference type="GO" id="GO:0006541">
    <property type="term" value="P:glutamine metabolic process"/>
    <property type="evidence" value="ECO:0007669"/>
    <property type="project" value="InterPro"/>
</dbReference>
<dbReference type="GO" id="GO:0006526">
    <property type="term" value="P:L-arginine biosynthetic process"/>
    <property type="evidence" value="ECO:0007669"/>
    <property type="project" value="UniProtKB-UniRule"/>
</dbReference>
<dbReference type="CDD" id="cd01744">
    <property type="entry name" value="GATase1_CPSase"/>
    <property type="match status" value="1"/>
</dbReference>
<dbReference type="FunFam" id="3.40.50.880:FF:000029">
    <property type="entry name" value="Carbamoyl-phosphate synthase small chain"/>
    <property type="match status" value="1"/>
</dbReference>
<dbReference type="FunFam" id="3.50.30.20:FF:000001">
    <property type="entry name" value="Carbamoyl-phosphate synthase small chain"/>
    <property type="match status" value="1"/>
</dbReference>
<dbReference type="Gene3D" id="3.40.50.880">
    <property type="match status" value="1"/>
</dbReference>
<dbReference type="Gene3D" id="3.50.30.20">
    <property type="entry name" value="Carbamoyl-phosphate synthase small subunit, N-terminal domain"/>
    <property type="match status" value="1"/>
</dbReference>
<dbReference type="HAMAP" id="MF_01209">
    <property type="entry name" value="CPSase_S_chain"/>
    <property type="match status" value="1"/>
</dbReference>
<dbReference type="InterPro" id="IPR050472">
    <property type="entry name" value="Anth_synth/Amidotransfase"/>
</dbReference>
<dbReference type="InterPro" id="IPR006274">
    <property type="entry name" value="CarbamoylP_synth_ssu"/>
</dbReference>
<dbReference type="InterPro" id="IPR002474">
    <property type="entry name" value="CarbamoylP_synth_ssu_N"/>
</dbReference>
<dbReference type="InterPro" id="IPR036480">
    <property type="entry name" value="CarbP_synth_ssu_N_sf"/>
</dbReference>
<dbReference type="InterPro" id="IPR029062">
    <property type="entry name" value="Class_I_gatase-like"/>
</dbReference>
<dbReference type="InterPro" id="IPR035686">
    <property type="entry name" value="CPSase_GATase1"/>
</dbReference>
<dbReference type="InterPro" id="IPR017926">
    <property type="entry name" value="GATASE"/>
</dbReference>
<dbReference type="NCBIfam" id="TIGR01368">
    <property type="entry name" value="CPSaseIIsmall"/>
    <property type="match status" value="1"/>
</dbReference>
<dbReference type="NCBIfam" id="NF009475">
    <property type="entry name" value="PRK12838.1"/>
    <property type="match status" value="1"/>
</dbReference>
<dbReference type="PANTHER" id="PTHR43418:SF7">
    <property type="entry name" value="CARBAMOYL-PHOSPHATE SYNTHASE SMALL CHAIN"/>
    <property type="match status" value="1"/>
</dbReference>
<dbReference type="PANTHER" id="PTHR43418">
    <property type="entry name" value="MULTIFUNCTIONAL TRYPTOPHAN BIOSYNTHESIS PROTEIN-RELATED"/>
    <property type="match status" value="1"/>
</dbReference>
<dbReference type="Pfam" id="PF00988">
    <property type="entry name" value="CPSase_sm_chain"/>
    <property type="match status" value="1"/>
</dbReference>
<dbReference type="Pfam" id="PF00117">
    <property type="entry name" value="GATase"/>
    <property type="match status" value="1"/>
</dbReference>
<dbReference type="PRINTS" id="PR00097">
    <property type="entry name" value="ANTSNTHASEII"/>
</dbReference>
<dbReference type="PRINTS" id="PR00099">
    <property type="entry name" value="CPSGATASE"/>
</dbReference>
<dbReference type="PRINTS" id="PR00096">
    <property type="entry name" value="GATASE"/>
</dbReference>
<dbReference type="SMART" id="SM01097">
    <property type="entry name" value="CPSase_sm_chain"/>
    <property type="match status" value="1"/>
</dbReference>
<dbReference type="SUPFAM" id="SSF52021">
    <property type="entry name" value="Carbamoyl phosphate synthetase, small subunit N-terminal domain"/>
    <property type="match status" value="1"/>
</dbReference>
<dbReference type="SUPFAM" id="SSF52317">
    <property type="entry name" value="Class I glutamine amidotransferase-like"/>
    <property type="match status" value="1"/>
</dbReference>
<dbReference type="PROSITE" id="PS51273">
    <property type="entry name" value="GATASE_TYPE_1"/>
    <property type="match status" value="1"/>
</dbReference>
<gene>
    <name evidence="1" type="primary">carA</name>
    <name type="synonym">pyrAA</name>
</gene>
<comment type="function">
    <text evidence="1">Small subunit of the glutamine-dependent carbamoyl phosphate synthetase (CPSase). CPSase catalyzes the formation of carbamoyl phosphate from the ammonia moiety of glutamine, carbonate, and phosphate donated by ATP, constituting the first step of 2 biosynthetic pathways, one leading to arginine and/or urea and the other to pyrimidine nucleotides. The small subunit (glutamine amidotransferase) binds and cleaves glutamine to supply the large subunit with the substrate ammonia.</text>
</comment>
<comment type="catalytic activity">
    <reaction evidence="1">
        <text>hydrogencarbonate + L-glutamine + 2 ATP + H2O = carbamoyl phosphate + L-glutamate + 2 ADP + phosphate + 2 H(+)</text>
        <dbReference type="Rhea" id="RHEA:18633"/>
        <dbReference type="ChEBI" id="CHEBI:15377"/>
        <dbReference type="ChEBI" id="CHEBI:15378"/>
        <dbReference type="ChEBI" id="CHEBI:17544"/>
        <dbReference type="ChEBI" id="CHEBI:29985"/>
        <dbReference type="ChEBI" id="CHEBI:30616"/>
        <dbReference type="ChEBI" id="CHEBI:43474"/>
        <dbReference type="ChEBI" id="CHEBI:58228"/>
        <dbReference type="ChEBI" id="CHEBI:58359"/>
        <dbReference type="ChEBI" id="CHEBI:456216"/>
        <dbReference type="EC" id="6.3.5.5"/>
    </reaction>
</comment>
<comment type="catalytic activity">
    <molecule>Carbamoyl phosphate synthase small chain</molecule>
    <reaction evidence="1">
        <text>L-glutamine + H2O = L-glutamate + NH4(+)</text>
        <dbReference type="Rhea" id="RHEA:15889"/>
        <dbReference type="ChEBI" id="CHEBI:15377"/>
        <dbReference type="ChEBI" id="CHEBI:28938"/>
        <dbReference type="ChEBI" id="CHEBI:29985"/>
        <dbReference type="ChEBI" id="CHEBI:58359"/>
    </reaction>
</comment>
<comment type="pathway">
    <text evidence="1">Amino-acid biosynthesis; L-arginine biosynthesis; carbamoyl phosphate from bicarbonate: step 1/1.</text>
</comment>
<comment type="pathway">
    <text evidence="1">Pyrimidine metabolism; UMP biosynthesis via de novo pathway; (S)-dihydroorotate from bicarbonate: step 1/3.</text>
</comment>
<comment type="subunit">
    <text evidence="1">Composed of two chains; the small (or glutamine) chain promotes the hydrolysis of glutamine to ammonia, which is used by the large (or ammonia) chain to synthesize carbamoyl phosphate. Tetramer of heterodimers (alpha,beta)4.</text>
</comment>
<comment type="similarity">
    <text evidence="1">Belongs to the CarA family.</text>
</comment>
<name>CARA_BACCL</name>
<reference key="1">
    <citation type="journal article" date="1994" name="J. Bacteriol.">
        <title>The pyrimidine biosynthesis operon of the thermophile Bacillus caldolyticus includes genes for uracil phosphoribosyltransferase and uracil permease.</title>
        <authorList>
            <person name="Ghim S.Y."/>
            <person name="Neuhard J."/>
        </authorList>
    </citation>
    <scope>NUCLEOTIDE SEQUENCE [GENOMIC DNA]</scope>
    <source>
        <strain>DSM 405 / NBRC 15313 / YP-T</strain>
    </source>
</reference>
<sequence>MKRQLILEDGSFFVGERFGSLKETTGEVVFNTGMTGYQEILSDPSYCGQIVTMTYPLIGNYGINRDDFEAIRPHVHGFIVKEACVKPSNWRGELTLDEYLKEKGIPGLSGIDTRKLTRLIRQYGTLKGMICGLDVDPVEAAAKLRAMEWPRDQVRRVSTKSAYPSPGRGERIVLIDFGMKHGILRELNKRNCDVIVLPYNATAEEVLGWHPDGVMLSNGPGDPKDVPEAIEMIRGILGKVPLFGICLGHQLFALACGANTEKMKFGHRGSNHPVKDLRTGKVAITSQNHGYTVTHESLSGTRLEVTHIALNDGTVEGLRHLDVPAFTVQYHPEASPGPEDANPLFDEFLALIREFNKKGEVIHA</sequence>
<protein>
    <recommendedName>
        <fullName evidence="1">Carbamoyl phosphate synthase small chain</fullName>
        <ecNumber evidence="1">6.3.5.5</ecNumber>
    </recommendedName>
    <alternativeName>
        <fullName evidence="1">Carbamoyl phosphate synthetase glutamine chain</fullName>
    </alternativeName>
</protein>
<keyword id="KW-0028">Amino-acid biosynthesis</keyword>
<keyword id="KW-0055">Arginine biosynthesis</keyword>
<keyword id="KW-0067">ATP-binding</keyword>
<keyword id="KW-0315">Glutamine amidotransferase</keyword>
<keyword id="KW-0436">Ligase</keyword>
<keyword id="KW-0547">Nucleotide-binding</keyword>
<keyword id="KW-0665">Pyrimidine biosynthesis</keyword>
<accession>P52557</accession>
<organism>
    <name type="scientific">Bacillus caldolyticus</name>
    <dbReference type="NCBI Taxonomy" id="1394"/>
    <lineage>
        <taxon>Bacteria</taxon>
        <taxon>Bacillati</taxon>
        <taxon>Bacillota</taxon>
        <taxon>Bacilli</taxon>
        <taxon>Bacillales</taxon>
        <taxon>Anoxybacillaceae</taxon>
        <taxon>Geobacillus</taxon>
        <taxon>Geobacillus thermoleovorans group</taxon>
    </lineage>
</organism>
<evidence type="ECO:0000255" key="1">
    <source>
        <dbReference type="HAMAP-Rule" id="MF_01209"/>
    </source>
</evidence>
<proteinExistence type="inferred from homology"/>